<reference key="1">
    <citation type="journal article" date="2007" name="J. Bacteriol.">
        <title>Genome sequence of Avery's virulent serotype 2 strain D39 of Streptococcus pneumoniae and comparison with that of unencapsulated laboratory strain R6.</title>
        <authorList>
            <person name="Lanie J.A."/>
            <person name="Ng W.-L."/>
            <person name="Kazmierczak K.M."/>
            <person name="Andrzejewski T.M."/>
            <person name="Davidsen T.M."/>
            <person name="Wayne K.J."/>
            <person name="Tettelin H."/>
            <person name="Glass J.I."/>
            <person name="Winkler M.E."/>
        </authorList>
    </citation>
    <scope>NUCLEOTIDE SEQUENCE [LARGE SCALE GENOMIC DNA]</scope>
    <source>
        <strain>D39 / NCTC 7466</strain>
    </source>
</reference>
<gene>
    <name type="ordered locus">SPD_1653</name>
</gene>
<protein>
    <recommendedName>
        <fullName evidence="1">Putative membrane protein insertion efficiency factor</fullName>
    </recommendedName>
</protein>
<evidence type="ECO:0000255" key="1">
    <source>
        <dbReference type="HAMAP-Rule" id="MF_00386"/>
    </source>
</evidence>
<evidence type="ECO:0000256" key="2">
    <source>
        <dbReference type="SAM" id="MobiDB-lite"/>
    </source>
</evidence>
<keyword id="KW-1003">Cell membrane</keyword>
<keyword id="KW-0472">Membrane</keyword>
<keyword id="KW-1185">Reference proteome</keyword>
<organism>
    <name type="scientific">Streptococcus pneumoniae serotype 2 (strain D39 / NCTC 7466)</name>
    <dbReference type="NCBI Taxonomy" id="373153"/>
    <lineage>
        <taxon>Bacteria</taxon>
        <taxon>Bacillati</taxon>
        <taxon>Bacillota</taxon>
        <taxon>Bacilli</taxon>
        <taxon>Lactobacillales</taxon>
        <taxon>Streptococcaceae</taxon>
        <taxon>Streptococcus</taxon>
    </lineage>
</organism>
<proteinExistence type="inferred from homology"/>
<sequence length="80" mass="9336">MKRILIALVRFYQRFISPVFPPSCRFELTCSNYMIQAIEKHGFKGVLMGLARILRCHPWSKTGKDPVPDHFSLKRNQEGE</sequence>
<comment type="function">
    <text evidence="1">Could be involved in insertion of integral membrane proteins into the membrane.</text>
</comment>
<comment type="subcellular location">
    <subcellularLocation>
        <location evidence="1">Cell membrane</location>
        <topology evidence="1">Peripheral membrane protein</topology>
        <orientation evidence="1">Cytoplasmic side</orientation>
    </subcellularLocation>
</comment>
<comment type="similarity">
    <text evidence="1">Belongs to the UPF0161 family.</text>
</comment>
<name>YIDD_STRP2</name>
<dbReference type="EMBL" id="CP000410">
    <property type="protein sequence ID" value="ABJ54493.1"/>
    <property type="molecule type" value="Genomic_DNA"/>
</dbReference>
<dbReference type="PaxDb" id="373153-SPD_1653"/>
<dbReference type="KEGG" id="spd:SPD_1653"/>
<dbReference type="eggNOG" id="COG0759">
    <property type="taxonomic scope" value="Bacteria"/>
</dbReference>
<dbReference type="HOGENOM" id="CLU_144811_5_2_9"/>
<dbReference type="BioCyc" id="SPNE373153:G1G6V-1787-MONOMER"/>
<dbReference type="Proteomes" id="UP000001452">
    <property type="component" value="Chromosome"/>
</dbReference>
<dbReference type="GO" id="GO:0005886">
    <property type="term" value="C:plasma membrane"/>
    <property type="evidence" value="ECO:0007669"/>
    <property type="project" value="UniProtKB-SubCell"/>
</dbReference>
<dbReference type="HAMAP" id="MF_00386">
    <property type="entry name" value="UPF0161_YidD"/>
    <property type="match status" value="1"/>
</dbReference>
<dbReference type="InterPro" id="IPR002696">
    <property type="entry name" value="Membr_insert_effic_factor_YidD"/>
</dbReference>
<dbReference type="NCBIfam" id="TIGR00278">
    <property type="entry name" value="membrane protein insertion efficiency factor YidD"/>
    <property type="match status" value="1"/>
</dbReference>
<dbReference type="PANTHER" id="PTHR33383">
    <property type="entry name" value="MEMBRANE PROTEIN INSERTION EFFICIENCY FACTOR-RELATED"/>
    <property type="match status" value="1"/>
</dbReference>
<dbReference type="PANTHER" id="PTHR33383:SF1">
    <property type="entry name" value="MEMBRANE PROTEIN INSERTION EFFICIENCY FACTOR-RELATED"/>
    <property type="match status" value="1"/>
</dbReference>
<dbReference type="Pfam" id="PF01809">
    <property type="entry name" value="YidD"/>
    <property type="match status" value="1"/>
</dbReference>
<dbReference type="SMART" id="SM01234">
    <property type="entry name" value="Haemolytic"/>
    <property type="match status" value="1"/>
</dbReference>
<feature type="chain" id="PRO_1000013135" description="Putative membrane protein insertion efficiency factor">
    <location>
        <begin position="1"/>
        <end position="80"/>
    </location>
</feature>
<feature type="region of interest" description="Disordered" evidence="2">
    <location>
        <begin position="61"/>
        <end position="80"/>
    </location>
</feature>
<feature type="compositionally biased region" description="Basic and acidic residues" evidence="2">
    <location>
        <begin position="62"/>
        <end position="80"/>
    </location>
</feature>
<accession>Q04IT5</accession>